<proteinExistence type="inferred from homology"/>
<name>RBFA_PSEA6</name>
<accession>Q15V71</accession>
<sequence length="138" mass="16003">MAREFSRTDRVGQQIHKEIASILQNEFKNRDPRLGMVTVSAVEVSRDLAYTKIYVTFFENDEEVMDNYLSILEENKGYIRTLLANRMRMRAVPAIKFVRDGSLSEGIRISNLVDETLNKDKERARNAGRSLDEDEQED</sequence>
<feature type="chain" id="PRO_1000000172" description="Ribosome-binding factor A">
    <location>
        <begin position="1"/>
        <end position="138"/>
    </location>
</feature>
<dbReference type="EMBL" id="CP000388">
    <property type="protein sequence ID" value="ABG40217.1"/>
    <property type="molecule type" value="Genomic_DNA"/>
</dbReference>
<dbReference type="RefSeq" id="WP_011574522.1">
    <property type="nucleotide sequence ID" value="NC_008228.1"/>
</dbReference>
<dbReference type="SMR" id="Q15V71"/>
<dbReference type="STRING" id="342610.Patl_1696"/>
<dbReference type="KEGG" id="pat:Patl_1696"/>
<dbReference type="eggNOG" id="COG0858">
    <property type="taxonomic scope" value="Bacteria"/>
</dbReference>
<dbReference type="HOGENOM" id="CLU_089475_5_0_6"/>
<dbReference type="OrthoDB" id="307788at2"/>
<dbReference type="Proteomes" id="UP000001981">
    <property type="component" value="Chromosome"/>
</dbReference>
<dbReference type="GO" id="GO:0005829">
    <property type="term" value="C:cytosol"/>
    <property type="evidence" value="ECO:0007669"/>
    <property type="project" value="TreeGrafter"/>
</dbReference>
<dbReference type="GO" id="GO:0043024">
    <property type="term" value="F:ribosomal small subunit binding"/>
    <property type="evidence" value="ECO:0007669"/>
    <property type="project" value="TreeGrafter"/>
</dbReference>
<dbReference type="GO" id="GO:0030490">
    <property type="term" value="P:maturation of SSU-rRNA"/>
    <property type="evidence" value="ECO:0007669"/>
    <property type="project" value="UniProtKB-UniRule"/>
</dbReference>
<dbReference type="Gene3D" id="3.30.300.20">
    <property type="match status" value="1"/>
</dbReference>
<dbReference type="HAMAP" id="MF_00003">
    <property type="entry name" value="RbfA"/>
    <property type="match status" value="1"/>
</dbReference>
<dbReference type="InterPro" id="IPR015946">
    <property type="entry name" value="KH_dom-like_a/b"/>
</dbReference>
<dbReference type="InterPro" id="IPR000238">
    <property type="entry name" value="RbfA"/>
</dbReference>
<dbReference type="InterPro" id="IPR023799">
    <property type="entry name" value="RbfA_dom_sf"/>
</dbReference>
<dbReference type="InterPro" id="IPR020053">
    <property type="entry name" value="Ribosome-bd_factorA_CS"/>
</dbReference>
<dbReference type="NCBIfam" id="TIGR00082">
    <property type="entry name" value="rbfA"/>
    <property type="match status" value="1"/>
</dbReference>
<dbReference type="PANTHER" id="PTHR33515">
    <property type="entry name" value="RIBOSOME-BINDING FACTOR A, CHLOROPLASTIC-RELATED"/>
    <property type="match status" value="1"/>
</dbReference>
<dbReference type="PANTHER" id="PTHR33515:SF1">
    <property type="entry name" value="RIBOSOME-BINDING FACTOR A, CHLOROPLASTIC-RELATED"/>
    <property type="match status" value="1"/>
</dbReference>
<dbReference type="Pfam" id="PF02033">
    <property type="entry name" value="RBFA"/>
    <property type="match status" value="1"/>
</dbReference>
<dbReference type="SUPFAM" id="SSF89919">
    <property type="entry name" value="Ribosome-binding factor A, RbfA"/>
    <property type="match status" value="1"/>
</dbReference>
<dbReference type="PROSITE" id="PS01319">
    <property type="entry name" value="RBFA"/>
    <property type="match status" value="1"/>
</dbReference>
<organism>
    <name type="scientific">Pseudoalteromonas atlantica (strain T6c / ATCC BAA-1087)</name>
    <dbReference type="NCBI Taxonomy" id="3042615"/>
    <lineage>
        <taxon>Bacteria</taxon>
        <taxon>Pseudomonadati</taxon>
        <taxon>Pseudomonadota</taxon>
        <taxon>Gammaproteobacteria</taxon>
        <taxon>Alteromonadales</taxon>
        <taxon>Alteromonadaceae</taxon>
        <taxon>Paraglaciecola</taxon>
    </lineage>
</organism>
<protein>
    <recommendedName>
        <fullName evidence="1">Ribosome-binding factor A</fullName>
    </recommendedName>
</protein>
<gene>
    <name evidence="1" type="primary">rbfA</name>
    <name type="ordered locus">Patl_1696</name>
</gene>
<comment type="function">
    <text evidence="1">One of several proteins that assist in the late maturation steps of the functional core of the 30S ribosomal subunit. Associates with free 30S ribosomal subunits (but not with 30S subunits that are part of 70S ribosomes or polysomes). Required for efficient processing of 16S rRNA. May interact with the 5'-terminal helix region of 16S rRNA.</text>
</comment>
<comment type="subunit">
    <text evidence="1">Monomer. Binds 30S ribosomal subunits, but not 50S ribosomal subunits or 70S ribosomes.</text>
</comment>
<comment type="subcellular location">
    <subcellularLocation>
        <location evidence="1">Cytoplasm</location>
    </subcellularLocation>
</comment>
<comment type="similarity">
    <text evidence="1">Belongs to the RbfA family.</text>
</comment>
<keyword id="KW-0963">Cytoplasm</keyword>
<keyword id="KW-0690">Ribosome biogenesis</keyword>
<evidence type="ECO:0000255" key="1">
    <source>
        <dbReference type="HAMAP-Rule" id="MF_00003"/>
    </source>
</evidence>
<reference key="1">
    <citation type="submission" date="2006-06" db="EMBL/GenBank/DDBJ databases">
        <title>Complete sequence of Pseudoalteromonas atlantica T6c.</title>
        <authorList>
            <consortium name="US DOE Joint Genome Institute"/>
            <person name="Copeland A."/>
            <person name="Lucas S."/>
            <person name="Lapidus A."/>
            <person name="Barry K."/>
            <person name="Detter J.C."/>
            <person name="Glavina del Rio T."/>
            <person name="Hammon N."/>
            <person name="Israni S."/>
            <person name="Dalin E."/>
            <person name="Tice H."/>
            <person name="Pitluck S."/>
            <person name="Saunders E."/>
            <person name="Brettin T."/>
            <person name="Bruce D."/>
            <person name="Han C."/>
            <person name="Tapia R."/>
            <person name="Gilna P."/>
            <person name="Schmutz J."/>
            <person name="Larimer F."/>
            <person name="Land M."/>
            <person name="Hauser L."/>
            <person name="Kyrpides N."/>
            <person name="Kim E."/>
            <person name="Karls A.C."/>
            <person name="Bartlett D."/>
            <person name="Higgins B.P."/>
            <person name="Richardson P."/>
        </authorList>
    </citation>
    <scope>NUCLEOTIDE SEQUENCE [LARGE SCALE GENOMIC DNA]</scope>
    <source>
        <strain>T6c / ATCC BAA-1087</strain>
    </source>
</reference>